<name>UAMDH_CAMJU</name>
<gene>
    <name evidence="2" type="primary">HS11.16</name>
</gene>
<reference evidence="4" key="1">
    <citation type="journal article" date="2015" name="PLoS ONE">
        <title>Updated Campylobacter jejuni Capsule PCR Multiplex Typing System and Its Application to Clinical Isolates from South and Southeast Asia.</title>
        <authorList>
            <person name="Poly F."/>
            <person name="Serichantalergs O."/>
            <person name="Kuroiwa J."/>
            <person name="Pootong P."/>
            <person name="Mason C."/>
            <person name="Guerry P."/>
            <person name="Parker C.T."/>
        </authorList>
    </citation>
    <scope>NUCLEOTIDE SEQUENCE [GENOMIC DNA]</scope>
    <source>
        <strain>HS:11</strain>
    </source>
</reference>
<reference key="2">
    <citation type="journal article" date="2016" name="PLoS ONE">
        <authorList>
            <person name="Poly F."/>
            <person name="Serichantalergs O."/>
            <person name="Kuroiwa J."/>
            <person name="Pootong P."/>
            <person name="Mason C."/>
            <person name="Guerry P."/>
            <person name="Parker C.T."/>
        </authorList>
    </citation>
    <scope>ERRATUM OF PUBMED:26630669</scope>
</reference>
<reference key="3">
    <citation type="journal article" date="2024" name="Biochemistry">
        <title>Biosynthesis of UDP-alpha-N-Acetyl-d-mannosaminuronic Acid and CMP-beta-N-Acetyl-d-neuraminic Acid for the Capsular Polysaccharides of Campylobacter jejuni.</title>
        <authorList>
            <person name="Ghosh M.K."/>
            <person name="Raushel F.M."/>
        </authorList>
    </citation>
    <scope>FUNCTION</scope>
    <scope>CATALYTIC ACTIVITY</scope>
    <scope>BIOPHYSICOCHEMICAL PROPERTIES</scope>
    <scope>PATHWAY</scope>
    <source>
        <strain>HS:11</strain>
    </source>
</reference>
<accession>A0A0U3AB61</accession>
<keyword id="KW-0972">Capsule biogenesis/degradation</keyword>
<keyword id="KW-0520">NAD</keyword>
<keyword id="KW-0560">Oxidoreductase</keyword>
<protein>
    <recommendedName>
        <fullName evidence="3">UDP-N-acetyl-D-mannosamine dehydrogenase</fullName>
        <ecNumber evidence="1">1.1.1.336</ecNumber>
    </recommendedName>
    <alternativeName>
        <fullName evidence="2">UDP-ManNAc 6-dehydrogenase</fullName>
    </alternativeName>
</protein>
<dbReference type="EC" id="1.1.1.336" evidence="1"/>
<dbReference type="EMBL" id="KT868845">
    <property type="protein sequence ID" value="ALT31928.1"/>
    <property type="molecule type" value="Genomic_DNA"/>
</dbReference>
<dbReference type="UniPathway" id="UPA00934"/>
<dbReference type="GO" id="GO:0051287">
    <property type="term" value="F:NAD binding"/>
    <property type="evidence" value="ECO:0007669"/>
    <property type="project" value="InterPro"/>
</dbReference>
<dbReference type="GO" id="GO:0016628">
    <property type="term" value="F:oxidoreductase activity, acting on the CH-CH group of donors, NAD or NADP as acceptor"/>
    <property type="evidence" value="ECO:0007669"/>
    <property type="project" value="InterPro"/>
</dbReference>
<dbReference type="GO" id="GO:0003979">
    <property type="term" value="F:UDP-glucose 6-dehydrogenase activity"/>
    <property type="evidence" value="ECO:0007669"/>
    <property type="project" value="UniProtKB-EC"/>
</dbReference>
<dbReference type="GO" id="GO:0000271">
    <property type="term" value="P:polysaccharide biosynthetic process"/>
    <property type="evidence" value="ECO:0007669"/>
    <property type="project" value="InterPro"/>
</dbReference>
<dbReference type="FunFam" id="3.40.50.720:FF:000139">
    <property type="entry name" value="UDP-N-acetyl-D-mannosamine dehydrogenase"/>
    <property type="match status" value="1"/>
</dbReference>
<dbReference type="Gene3D" id="1.20.5.100">
    <property type="entry name" value="Cytochrome c1, transmembrane anchor, C-terminal"/>
    <property type="match status" value="1"/>
</dbReference>
<dbReference type="Gene3D" id="3.40.50.720">
    <property type="entry name" value="NAD(P)-binding Rossmann-like Domain"/>
    <property type="match status" value="2"/>
</dbReference>
<dbReference type="InterPro" id="IPR008927">
    <property type="entry name" value="6-PGluconate_DH-like_C_sf"/>
</dbReference>
<dbReference type="InterPro" id="IPR036291">
    <property type="entry name" value="NAD(P)-bd_dom_sf"/>
</dbReference>
<dbReference type="InterPro" id="IPR017476">
    <property type="entry name" value="UDP-Glc/GDP-Man"/>
</dbReference>
<dbReference type="InterPro" id="IPR014027">
    <property type="entry name" value="UDP-Glc/GDP-Man_DH_C"/>
</dbReference>
<dbReference type="InterPro" id="IPR036220">
    <property type="entry name" value="UDP-Glc/GDP-Man_DH_C_sf"/>
</dbReference>
<dbReference type="InterPro" id="IPR014026">
    <property type="entry name" value="UDP-Glc/GDP-Man_DH_dimer"/>
</dbReference>
<dbReference type="InterPro" id="IPR001732">
    <property type="entry name" value="UDP-Glc/GDP-Man_DH_N"/>
</dbReference>
<dbReference type="InterPro" id="IPR028359">
    <property type="entry name" value="UDP_ManNAc/GlcNAc_DH"/>
</dbReference>
<dbReference type="NCBIfam" id="TIGR03026">
    <property type="entry name" value="NDP-sugDHase"/>
    <property type="match status" value="1"/>
</dbReference>
<dbReference type="NCBIfam" id="NF008286">
    <property type="entry name" value="PRK11064.1"/>
    <property type="match status" value="1"/>
</dbReference>
<dbReference type="PANTHER" id="PTHR43491">
    <property type="entry name" value="UDP-N-ACETYL-D-MANNOSAMINE DEHYDROGENASE"/>
    <property type="match status" value="1"/>
</dbReference>
<dbReference type="PANTHER" id="PTHR43491:SF1">
    <property type="entry name" value="UDP-N-ACETYL-D-MANNOSAMINE DEHYDROGENASE"/>
    <property type="match status" value="1"/>
</dbReference>
<dbReference type="Pfam" id="PF00984">
    <property type="entry name" value="UDPG_MGDP_dh"/>
    <property type="match status" value="1"/>
</dbReference>
<dbReference type="Pfam" id="PF03720">
    <property type="entry name" value="UDPG_MGDP_dh_C"/>
    <property type="match status" value="1"/>
</dbReference>
<dbReference type="Pfam" id="PF03721">
    <property type="entry name" value="UDPG_MGDP_dh_N"/>
    <property type="match status" value="1"/>
</dbReference>
<dbReference type="PIRSF" id="PIRSF500136">
    <property type="entry name" value="UDP_ManNAc_DH"/>
    <property type="match status" value="1"/>
</dbReference>
<dbReference type="PIRSF" id="PIRSF000124">
    <property type="entry name" value="UDPglc_GDPman_dh"/>
    <property type="match status" value="1"/>
</dbReference>
<dbReference type="SMART" id="SM00984">
    <property type="entry name" value="UDPG_MGDP_dh_C"/>
    <property type="match status" value="1"/>
</dbReference>
<dbReference type="SUPFAM" id="SSF48179">
    <property type="entry name" value="6-phosphogluconate dehydrogenase C-terminal domain-like"/>
    <property type="match status" value="1"/>
</dbReference>
<dbReference type="SUPFAM" id="SSF51735">
    <property type="entry name" value="NAD(P)-binding Rossmann-fold domains"/>
    <property type="match status" value="1"/>
</dbReference>
<dbReference type="SUPFAM" id="SSF52413">
    <property type="entry name" value="UDP-glucose/GDP-mannose dehydrogenase C-terminal domain"/>
    <property type="match status" value="1"/>
</dbReference>
<feature type="chain" id="PRO_0000462280" description="UDP-N-acetyl-D-mannosamine dehydrogenase">
    <location>
        <begin position="1"/>
        <end position="407"/>
    </location>
</feature>
<comment type="function">
    <text evidence="1">Dehydrogenase involved in the biosynthesis of capsular polysaccharides (PubMed:38382015). Catalyzes the NAD(+)-dependent oxidation of UDP-N-acetyl-D-mannosamine (UDP-ManNAc) to UDP-N-acetyl-D-mannosaminuronic acid (UDP-ManNAcA) (PubMed:38382015).</text>
</comment>
<comment type="catalytic activity">
    <reaction evidence="1">
        <text>UDP-N-acetyl-alpha-D-mannosamine + 2 NAD(+) + H2O = UDP-N-acetyl-alpha-D-mannosaminouronate + 2 NADH + 3 H(+)</text>
        <dbReference type="Rhea" id="RHEA:25780"/>
        <dbReference type="ChEBI" id="CHEBI:15377"/>
        <dbReference type="ChEBI" id="CHEBI:15378"/>
        <dbReference type="ChEBI" id="CHEBI:57540"/>
        <dbReference type="ChEBI" id="CHEBI:57945"/>
        <dbReference type="ChEBI" id="CHEBI:68623"/>
        <dbReference type="ChEBI" id="CHEBI:70731"/>
        <dbReference type="EC" id="1.1.1.336"/>
    </reaction>
    <physiologicalReaction direction="left-to-right" evidence="1">
        <dbReference type="Rhea" id="RHEA:25781"/>
    </physiologicalReaction>
</comment>
<comment type="biophysicochemical properties">
    <kinetics>
        <KM evidence="1">22 uM for UDP-ManNAc</KM>
        <text evidence="1">kcat is 0.20 sec(-1).</text>
    </kinetics>
</comment>
<comment type="pathway">
    <text evidence="1">Capsule biogenesis; capsule polysaccharide biosynthesis.</text>
</comment>
<comment type="similarity">
    <text evidence="3">Belongs to the UDP-glucose/GDP-mannose dehydrogenase family.</text>
</comment>
<evidence type="ECO:0000269" key="1">
    <source>
    </source>
</evidence>
<evidence type="ECO:0000303" key="2">
    <source>
    </source>
</evidence>
<evidence type="ECO:0000305" key="3"/>
<evidence type="ECO:0000312" key="4">
    <source>
        <dbReference type="EMBL" id="ALT31928.1"/>
    </source>
</evidence>
<organism>
    <name type="scientific">Campylobacter jejuni</name>
    <dbReference type="NCBI Taxonomy" id="197"/>
    <lineage>
        <taxon>Bacteria</taxon>
        <taxon>Pseudomonadati</taxon>
        <taxon>Campylobacterota</taxon>
        <taxon>Epsilonproteobacteria</taxon>
        <taxon>Campylobacterales</taxon>
        <taxon>Campylobacteraceae</taxon>
        <taxon>Campylobacter</taxon>
    </lineage>
</organism>
<proteinExistence type="evidence at protein level"/>
<sequence length="407" mass="45225">MNQFNKVCVIGLGYIGLPTAAIFASRKIKVIGVDINQNIVDIINKGKIHIVEPGLDILVHMVVNDGYLKATTLPEEADAFIIAVPTPFKGDNHEPNLDYIEMASKAIAKVLKKGNLVILESTSPVGTTEQMAKWLAEERSDLSFPHQCGEVSDIKIAHCPERVLPGQVIRELVENDRIIGGMTQKCAEYAIRLYKIFVQGECIMTNARTAEMTKLTENSFRDLNIAFANELSILCDKLDINVWELIKLANRHPRVNILQPGCGVGGHCIAVDPWFIVYQNPNEAKIIKTAREVNDNKPNFVVQKIKKKIKDILGPKIACLGLAFKPDIDDLRESPALDIVIKLASENASQILVVEPNIKQLPLKLQNKRNIKLVCLSQALDEADVVAVLVRHKEFIEVQSDKVVSFC</sequence>